<sequence>MSLSNAPLGQHVAYPSQYDPGLLFPIPRATNRASLQLGAALPFTGVDLWNAYELSWLDARGKPRVAMATFSFPADSPNIVESKSFKLYLNSFNQTRLPNAQALRDRLERDLAAAAGAPVGLEFISPQRFGELNMAELDGIYIDKLDIEIDTYEPAPQLLQCAPGDEVEETLATRLLKSNCPVTGQPDWASLQVRYRGRPIDRAALLKYVVSFRQHAEFHEHCVERIFGDIMRACQPRQLTVYARYTRRGGLDINPWRSNFESAPPADVRTARQ</sequence>
<comment type="function">
    <text evidence="1">Catalyzes the NADPH-dependent reduction of 7-cyano-7-deazaguanine (preQ0) to 7-aminomethyl-7-deazaguanine (preQ1).</text>
</comment>
<comment type="catalytic activity">
    <reaction evidence="1">
        <text>7-aminomethyl-7-carbaguanine + 2 NADP(+) = 7-cyano-7-deazaguanine + 2 NADPH + 3 H(+)</text>
        <dbReference type="Rhea" id="RHEA:13409"/>
        <dbReference type="ChEBI" id="CHEBI:15378"/>
        <dbReference type="ChEBI" id="CHEBI:45075"/>
        <dbReference type="ChEBI" id="CHEBI:57783"/>
        <dbReference type="ChEBI" id="CHEBI:58349"/>
        <dbReference type="ChEBI" id="CHEBI:58703"/>
        <dbReference type="EC" id="1.7.1.13"/>
    </reaction>
</comment>
<comment type="pathway">
    <text evidence="1">tRNA modification; tRNA-queuosine biosynthesis.</text>
</comment>
<comment type="subunit">
    <text evidence="1">Homodimer.</text>
</comment>
<comment type="subcellular location">
    <subcellularLocation>
        <location evidence="1">Cytoplasm</location>
    </subcellularLocation>
</comment>
<comment type="similarity">
    <text evidence="1">Belongs to the GTP cyclohydrolase I family. QueF type 2 subfamily.</text>
</comment>
<gene>
    <name evidence="1" type="primary">queF</name>
    <name type="ordered locus">BP2084</name>
</gene>
<keyword id="KW-0963">Cytoplasm</keyword>
<keyword id="KW-0521">NADP</keyword>
<keyword id="KW-0560">Oxidoreductase</keyword>
<keyword id="KW-0671">Queuosine biosynthesis</keyword>
<keyword id="KW-1185">Reference proteome</keyword>
<reference key="1">
    <citation type="journal article" date="2003" name="Nat. Genet.">
        <title>Comparative analysis of the genome sequences of Bordetella pertussis, Bordetella parapertussis and Bordetella bronchiseptica.</title>
        <authorList>
            <person name="Parkhill J."/>
            <person name="Sebaihia M."/>
            <person name="Preston A."/>
            <person name="Murphy L.D."/>
            <person name="Thomson N.R."/>
            <person name="Harris D.E."/>
            <person name="Holden M.T.G."/>
            <person name="Churcher C.M."/>
            <person name="Bentley S.D."/>
            <person name="Mungall K.L."/>
            <person name="Cerdeno-Tarraga A.-M."/>
            <person name="Temple L."/>
            <person name="James K.D."/>
            <person name="Harris B."/>
            <person name="Quail M.A."/>
            <person name="Achtman M."/>
            <person name="Atkin R."/>
            <person name="Baker S."/>
            <person name="Basham D."/>
            <person name="Bason N."/>
            <person name="Cherevach I."/>
            <person name="Chillingworth T."/>
            <person name="Collins M."/>
            <person name="Cronin A."/>
            <person name="Davis P."/>
            <person name="Doggett J."/>
            <person name="Feltwell T."/>
            <person name="Goble A."/>
            <person name="Hamlin N."/>
            <person name="Hauser H."/>
            <person name="Holroyd S."/>
            <person name="Jagels K."/>
            <person name="Leather S."/>
            <person name="Moule S."/>
            <person name="Norberczak H."/>
            <person name="O'Neil S."/>
            <person name="Ormond D."/>
            <person name="Price C."/>
            <person name="Rabbinowitsch E."/>
            <person name="Rutter S."/>
            <person name="Sanders M."/>
            <person name="Saunders D."/>
            <person name="Seeger K."/>
            <person name="Sharp S."/>
            <person name="Simmonds M."/>
            <person name="Skelton J."/>
            <person name="Squares R."/>
            <person name="Squares S."/>
            <person name="Stevens K."/>
            <person name="Unwin L."/>
            <person name="Whitehead S."/>
            <person name="Barrell B.G."/>
            <person name="Maskell D.J."/>
        </authorList>
    </citation>
    <scope>NUCLEOTIDE SEQUENCE [LARGE SCALE GENOMIC DNA]</scope>
    <source>
        <strain>Tohama I / ATCC BAA-589 / NCTC 13251</strain>
    </source>
</reference>
<name>QUEF_BORPE</name>
<dbReference type="EC" id="1.7.1.13" evidence="1"/>
<dbReference type="EMBL" id="BX640417">
    <property type="protein sequence ID" value="CAE42362.1"/>
    <property type="molecule type" value="Genomic_DNA"/>
</dbReference>
<dbReference type="RefSeq" id="NP_880745.1">
    <property type="nucleotide sequence ID" value="NC_002929.2"/>
</dbReference>
<dbReference type="RefSeq" id="WP_010930727.1">
    <property type="nucleotide sequence ID" value="NZ_CP039022.1"/>
</dbReference>
<dbReference type="SMR" id="Q7VWV5"/>
<dbReference type="STRING" id="257313.BP2084"/>
<dbReference type="PaxDb" id="257313-BP2084"/>
<dbReference type="GeneID" id="69601853"/>
<dbReference type="KEGG" id="bpe:BP2084"/>
<dbReference type="PATRIC" id="fig|257313.5.peg.2241"/>
<dbReference type="eggNOG" id="COG0780">
    <property type="taxonomic scope" value="Bacteria"/>
</dbReference>
<dbReference type="eggNOG" id="COG2904">
    <property type="taxonomic scope" value="Bacteria"/>
</dbReference>
<dbReference type="HOGENOM" id="CLU_054738_0_0_4"/>
<dbReference type="UniPathway" id="UPA00392"/>
<dbReference type="Proteomes" id="UP000002676">
    <property type="component" value="Chromosome"/>
</dbReference>
<dbReference type="GO" id="GO:0005737">
    <property type="term" value="C:cytoplasm"/>
    <property type="evidence" value="ECO:0007669"/>
    <property type="project" value="UniProtKB-SubCell"/>
</dbReference>
<dbReference type="GO" id="GO:0033739">
    <property type="term" value="F:preQ1 synthase activity"/>
    <property type="evidence" value="ECO:0007669"/>
    <property type="project" value="UniProtKB-UniRule"/>
</dbReference>
<dbReference type="GO" id="GO:0008616">
    <property type="term" value="P:queuosine biosynthetic process"/>
    <property type="evidence" value="ECO:0007669"/>
    <property type="project" value="UniProtKB-UniRule"/>
</dbReference>
<dbReference type="GO" id="GO:0006400">
    <property type="term" value="P:tRNA modification"/>
    <property type="evidence" value="ECO:0007669"/>
    <property type="project" value="UniProtKB-UniRule"/>
</dbReference>
<dbReference type="Gene3D" id="3.30.1130.10">
    <property type="match status" value="2"/>
</dbReference>
<dbReference type="HAMAP" id="MF_00817">
    <property type="entry name" value="QueF_type2"/>
    <property type="match status" value="1"/>
</dbReference>
<dbReference type="InterPro" id="IPR043133">
    <property type="entry name" value="GTP-CH-I_C/QueF"/>
</dbReference>
<dbReference type="InterPro" id="IPR050084">
    <property type="entry name" value="NADPH_dep_7-cyano-7-deazaG_red"/>
</dbReference>
<dbReference type="InterPro" id="IPR029500">
    <property type="entry name" value="QueF"/>
</dbReference>
<dbReference type="InterPro" id="IPR029139">
    <property type="entry name" value="QueF_N"/>
</dbReference>
<dbReference type="InterPro" id="IPR016428">
    <property type="entry name" value="QueF_type2"/>
</dbReference>
<dbReference type="NCBIfam" id="TIGR03138">
    <property type="entry name" value="QueF"/>
    <property type="match status" value="1"/>
</dbReference>
<dbReference type="PANTHER" id="PTHR34354">
    <property type="entry name" value="NADPH-DEPENDENT 7-CYANO-7-DEAZAGUANINE REDUCTASE"/>
    <property type="match status" value="1"/>
</dbReference>
<dbReference type="PANTHER" id="PTHR34354:SF1">
    <property type="entry name" value="NADPH-DEPENDENT 7-CYANO-7-DEAZAGUANINE REDUCTASE"/>
    <property type="match status" value="1"/>
</dbReference>
<dbReference type="Pfam" id="PF14489">
    <property type="entry name" value="QueF"/>
    <property type="match status" value="1"/>
</dbReference>
<dbReference type="Pfam" id="PF14819">
    <property type="entry name" value="QueF_N"/>
    <property type="match status" value="1"/>
</dbReference>
<dbReference type="PIRSF" id="PIRSF004750">
    <property type="entry name" value="Nitrile_oxidored_YqcD_prd"/>
    <property type="match status" value="1"/>
</dbReference>
<dbReference type="SUPFAM" id="SSF55620">
    <property type="entry name" value="Tetrahydrobiopterin biosynthesis enzymes-like"/>
    <property type="match status" value="1"/>
</dbReference>
<feature type="chain" id="PRO_0000163022" description="NADPH-dependent 7-cyano-7-deazaguanine reductase">
    <location>
        <begin position="1"/>
        <end position="273"/>
    </location>
</feature>
<feature type="active site" description="Thioimide intermediate" evidence="1">
    <location>
        <position position="180"/>
    </location>
</feature>
<feature type="active site" description="Proton donor" evidence="1">
    <location>
        <position position="187"/>
    </location>
</feature>
<feature type="binding site" evidence="1">
    <location>
        <begin position="80"/>
        <end position="82"/>
    </location>
    <ligand>
        <name>substrate</name>
    </ligand>
</feature>
<feature type="binding site" evidence="1">
    <location>
        <begin position="82"/>
        <end position="83"/>
    </location>
    <ligand>
        <name>NADPH</name>
        <dbReference type="ChEBI" id="CHEBI:57783"/>
    </ligand>
</feature>
<feature type="binding site" evidence="1">
    <location>
        <begin position="219"/>
        <end position="220"/>
    </location>
    <ligand>
        <name>substrate</name>
    </ligand>
</feature>
<feature type="binding site" evidence="1">
    <location>
        <begin position="248"/>
        <end position="249"/>
    </location>
    <ligand>
        <name>NADPH</name>
        <dbReference type="ChEBI" id="CHEBI:57783"/>
    </ligand>
</feature>
<protein>
    <recommendedName>
        <fullName evidence="1">NADPH-dependent 7-cyano-7-deazaguanine reductase</fullName>
        <ecNumber evidence="1">1.7.1.13</ecNumber>
    </recommendedName>
    <alternativeName>
        <fullName evidence="1">7-cyano-7-carbaguanine reductase</fullName>
    </alternativeName>
    <alternativeName>
        <fullName evidence="1">NADPH-dependent nitrile oxidoreductase</fullName>
    </alternativeName>
    <alternativeName>
        <fullName evidence="1">PreQ(0) reductase</fullName>
    </alternativeName>
</protein>
<accession>Q7VWV5</accession>
<organism>
    <name type="scientific">Bordetella pertussis (strain Tohama I / ATCC BAA-589 / NCTC 13251)</name>
    <dbReference type="NCBI Taxonomy" id="257313"/>
    <lineage>
        <taxon>Bacteria</taxon>
        <taxon>Pseudomonadati</taxon>
        <taxon>Pseudomonadota</taxon>
        <taxon>Betaproteobacteria</taxon>
        <taxon>Burkholderiales</taxon>
        <taxon>Alcaligenaceae</taxon>
        <taxon>Bordetella</taxon>
    </lineage>
</organism>
<evidence type="ECO:0000255" key="1">
    <source>
        <dbReference type="HAMAP-Rule" id="MF_00817"/>
    </source>
</evidence>
<proteinExistence type="inferred from homology"/>